<sequence length="150" mass="15786">MTGIRISVQTLPHFEGLSLPRYMSEHAAGMDICAAVADEVVILPGERALIPTGIAIALPEGFEAQIRPRSGLALKHGVTLVNAPGTIDADYRGEIGVLLINHGNDPFVVARGSRVAQMVIAPVCRVAWSESGSLETTTRGDGGFGHTDES</sequence>
<comment type="function">
    <text evidence="1">This enzyme is involved in nucleotide metabolism: it produces dUMP, the immediate precursor of thymidine nucleotides and it decreases the intracellular concentration of dUTP so that uracil cannot be incorporated into DNA.</text>
</comment>
<comment type="catalytic activity">
    <reaction evidence="1">
        <text>dUTP + H2O = dUMP + diphosphate + H(+)</text>
        <dbReference type="Rhea" id="RHEA:10248"/>
        <dbReference type="ChEBI" id="CHEBI:15377"/>
        <dbReference type="ChEBI" id="CHEBI:15378"/>
        <dbReference type="ChEBI" id="CHEBI:33019"/>
        <dbReference type="ChEBI" id="CHEBI:61555"/>
        <dbReference type="ChEBI" id="CHEBI:246422"/>
        <dbReference type="EC" id="3.6.1.23"/>
    </reaction>
</comment>
<comment type="cofactor">
    <cofactor evidence="1">
        <name>Mg(2+)</name>
        <dbReference type="ChEBI" id="CHEBI:18420"/>
    </cofactor>
</comment>
<comment type="pathway">
    <text evidence="1">Pyrimidine metabolism; dUMP biosynthesis; dUMP from dCTP (dUTP route): step 2/2.</text>
</comment>
<comment type="similarity">
    <text evidence="1">Belongs to the dUTPase family.</text>
</comment>
<protein>
    <recommendedName>
        <fullName evidence="1">Deoxyuridine 5'-triphosphate nucleotidohydrolase</fullName>
        <shortName evidence="1">dUTPase</shortName>
        <ecNumber evidence="1">3.6.1.23</ecNumber>
    </recommendedName>
    <alternativeName>
        <fullName evidence="1">dUTP pyrophosphatase</fullName>
    </alternativeName>
</protein>
<evidence type="ECO:0000255" key="1">
    <source>
        <dbReference type="HAMAP-Rule" id="MF_00116"/>
    </source>
</evidence>
<reference key="1">
    <citation type="journal article" date="2007" name="Proc. Natl. Acad. Sci. U.S.A.">
        <title>The genome of Syntrophus aciditrophicus: life at the thermodynamic limit of microbial growth.</title>
        <authorList>
            <person name="McInerney M.J."/>
            <person name="Rohlin L."/>
            <person name="Mouttaki H."/>
            <person name="Kim U."/>
            <person name="Krupp R.S."/>
            <person name="Rios-Hernandez L."/>
            <person name="Sieber J."/>
            <person name="Struchtemeyer C.G."/>
            <person name="Bhattacharyya A."/>
            <person name="Campbell J.W."/>
            <person name="Gunsalus R.P."/>
        </authorList>
    </citation>
    <scope>NUCLEOTIDE SEQUENCE [LARGE SCALE GENOMIC DNA]</scope>
    <source>
        <strain>SB</strain>
    </source>
</reference>
<proteinExistence type="inferred from homology"/>
<gene>
    <name evidence="1" type="primary">dut</name>
    <name type="ordered locus">SYNAS_26680</name>
    <name type="ORF">SYN_01779</name>
</gene>
<feature type="chain" id="PRO_1000015526" description="Deoxyuridine 5'-triphosphate nucleotidohydrolase">
    <location>
        <begin position="1"/>
        <end position="150"/>
    </location>
</feature>
<feature type="binding site" evidence="1">
    <location>
        <begin position="69"/>
        <end position="71"/>
    </location>
    <ligand>
        <name>substrate</name>
    </ligand>
</feature>
<feature type="binding site" evidence="1">
    <location>
        <position position="82"/>
    </location>
    <ligand>
        <name>substrate</name>
    </ligand>
</feature>
<feature type="binding site" evidence="1">
    <location>
        <begin position="86"/>
        <end position="88"/>
    </location>
    <ligand>
        <name>substrate</name>
    </ligand>
</feature>
<name>DUT_SYNAS</name>
<keyword id="KW-0378">Hydrolase</keyword>
<keyword id="KW-0460">Magnesium</keyword>
<keyword id="KW-0479">Metal-binding</keyword>
<keyword id="KW-0546">Nucleotide metabolism</keyword>
<keyword id="KW-1185">Reference proteome</keyword>
<accession>Q2LWT5</accession>
<dbReference type="EC" id="3.6.1.23" evidence="1"/>
<dbReference type="EMBL" id="CP000252">
    <property type="protein sequence ID" value="ABC78547.1"/>
    <property type="molecule type" value="Genomic_DNA"/>
</dbReference>
<dbReference type="RefSeq" id="WP_011418566.1">
    <property type="nucleotide sequence ID" value="NC_007759.1"/>
</dbReference>
<dbReference type="SMR" id="Q2LWT5"/>
<dbReference type="FunCoup" id="Q2LWT5">
    <property type="interactions" value="361"/>
</dbReference>
<dbReference type="STRING" id="56780.SYN_01779"/>
<dbReference type="KEGG" id="sat:SYN_01779"/>
<dbReference type="eggNOG" id="COG0756">
    <property type="taxonomic scope" value="Bacteria"/>
</dbReference>
<dbReference type="HOGENOM" id="CLU_068508_1_2_7"/>
<dbReference type="InParanoid" id="Q2LWT5"/>
<dbReference type="OrthoDB" id="9809956at2"/>
<dbReference type="UniPathway" id="UPA00610">
    <property type="reaction ID" value="UER00666"/>
</dbReference>
<dbReference type="Proteomes" id="UP000001933">
    <property type="component" value="Chromosome"/>
</dbReference>
<dbReference type="GO" id="GO:0004170">
    <property type="term" value="F:dUTP diphosphatase activity"/>
    <property type="evidence" value="ECO:0007669"/>
    <property type="project" value="UniProtKB-UniRule"/>
</dbReference>
<dbReference type="GO" id="GO:0000287">
    <property type="term" value="F:magnesium ion binding"/>
    <property type="evidence" value="ECO:0007669"/>
    <property type="project" value="UniProtKB-UniRule"/>
</dbReference>
<dbReference type="GO" id="GO:0006226">
    <property type="term" value="P:dUMP biosynthetic process"/>
    <property type="evidence" value="ECO:0007669"/>
    <property type="project" value="UniProtKB-UniRule"/>
</dbReference>
<dbReference type="GO" id="GO:0046081">
    <property type="term" value="P:dUTP catabolic process"/>
    <property type="evidence" value="ECO:0007669"/>
    <property type="project" value="InterPro"/>
</dbReference>
<dbReference type="CDD" id="cd07557">
    <property type="entry name" value="trimeric_dUTPase"/>
    <property type="match status" value="1"/>
</dbReference>
<dbReference type="FunFam" id="2.70.40.10:FF:000002">
    <property type="entry name" value="dUTP diphosphatase"/>
    <property type="match status" value="1"/>
</dbReference>
<dbReference type="Gene3D" id="2.70.40.10">
    <property type="match status" value="1"/>
</dbReference>
<dbReference type="HAMAP" id="MF_00116">
    <property type="entry name" value="dUTPase_bact"/>
    <property type="match status" value="1"/>
</dbReference>
<dbReference type="InterPro" id="IPR008181">
    <property type="entry name" value="dUTPase"/>
</dbReference>
<dbReference type="InterPro" id="IPR029054">
    <property type="entry name" value="dUTPase-like"/>
</dbReference>
<dbReference type="InterPro" id="IPR036157">
    <property type="entry name" value="dUTPase-like_sf"/>
</dbReference>
<dbReference type="InterPro" id="IPR033704">
    <property type="entry name" value="dUTPase_trimeric"/>
</dbReference>
<dbReference type="NCBIfam" id="TIGR00576">
    <property type="entry name" value="dut"/>
    <property type="match status" value="1"/>
</dbReference>
<dbReference type="NCBIfam" id="NF001862">
    <property type="entry name" value="PRK00601.1"/>
    <property type="match status" value="1"/>
</dbReference>
<dbReference type="PANTHER" id="PTHR11241">
    <property type="entry name" value="DEOXYURIDINE 5'-TRIPHOSPHATE NUCLEOTIDOHYDROLASE"/>
    <property type="match status" value="1"/>
</dbReference>
<dbReference type="PANTHER" id="PTHR11241:SF0">
    <property type="entry name" value="DEOXYURIDINE 5'-TRIPHOSPHATE NUCLEOTIDOHYDROLASE"/>
    <property type="match status" value="1"/>
</dbReference>
<dbReference type="Pfam" id="PF00692">
    <property type="entry name" value="dUTPase"/>
    <property type="match status" value="1"/>
</dbReference>
<dbReference type="SUPFAM" id="SSF51283">
    <property type="entry name" value="dUTPase-like"/>
    <property type="match status" value="1"/>
</dbReference>
<organism>
    <name type="scientific">Syntrophus aciditrophicus (strain SB)</name>
    <dbReference type="NCBI Taxonomy" id="56780"/>
    <lineage>
        <taxon>Bacteria</taxon>
        <taxon>Pseudomonadati</taxon>
        <taxon>Thermodesulfobacteriota</taxon>
        <taxon>Syntrophia</taxon>
        <taxon>Syntrophales</taxon>
        <taxon>Syntrophaceae</taxon>
        <taxon>Syntrophus</taxon>
    </lineage>
</organism>